<proteinExistence type="inferred from homology"/>
<reference key="1">
    <citation type="journal article" date="2007" name="J. Bacteriol.">
        <title>Genome of the opportunistic pathogen Streptococcus sanguinis.</title>
        <authorList>
            <person name="Xu P."/>
            <person name="Alves J.M."/>
            <person name="Kitten T."/>
            <person name="Brown A."/>
            <person name="Chen Z."/>
            <person name="Ozaki L.S."/>
            <person name="Manque P."/>
            <person name="Ge X."/>
            <person name="Serrano M.G."/>
            <person name="Puiu D."/>
            <person name="Hendricks S."/>
            <person name="Wang Y."/>
            <person name="Chaplin M.D."/>
            <person name="Akan D."/>
            <person name="Paik S."/>
            <person name="Peterson D.L."/>
            <person name="Macrina F.L."/>
            <person name="Buck G.A."/>
        </authorList>
    </citation>
    <scope>NUCLEOTIDE SEQUENCE [LARGE SCALE GENOMIC DNA]</scope>
    <source>
        <strain>SK36</strain>
    </source>
</reference>
<evidence type="ECO:0000255" key="1">
    <source>
        <dbReference type="HAMAP-Rule" id="MF_00008"/>
    </source>
</evidence>
<gene>
    <name evidence="1" type="primary">thyA</name>
    <name type="ordered locus">SSA_1091</name>
</gene>
<sequence length="279" mass="32562">MTLADTIFKENIKKIMEQGVFSENARPRYKDGNVANSKYITGSFAEYDLSKGEFPITTLRPIAIKSAIKEVLWIYQDQSNSLELLNDKYNVHYWNDWEVGDTGTIGQRYGAVVKKHNIINKILQQLEANPWNRRNIISLWDYEAFEETDGLLPCAFQTMFDVRRVDGDIYLDATLTQRSNDMLVAHHINAMQYVALQMMIAKHFGWKVGKFFYFINNLHIYDNQFEQAEELLRREPSDCHPRLVLNVPDGTNFFDIKAEDFELLDYNPVKPQLKFDLAI</sequence>
<feature type="chain" id="PRO_1000000695" description="Thymidylate synthase">
    <location>
        <begin position="1"/>
        <end position="279"/>
    </location>
</feature>
<feature type="active site" description="Nucleophile" evidence="1">
    <location>
        <position position="154"/>
    </location>
</feature>
<feature type="binding site" evidence="1">
    <location>
        <begin position="133"/>
        <end position="134"/>
    </location>
    <ligand>
        <name>dUMP</name>
        <dbReference type="ChEBI" id="CHEBI:246422"/>
        <note>ligand shared between dimeric partners</note>
    </ligand>
</feature>
<feature type="binding site" description="in other chain" evidence="1">
    <location>
        <begin position="178"/>
        <end position="181"/>
    </location>
    <ligand>
        <name>dUMP</name>
        <dbReference type="ChEBI" id="CHEBI:246422"/>
        <note>ligand shared between dimeric partners</note>
    </ligand>
</feature>
<feature type="binding site" evidence="1">
    <location>
        <position position="181"/>
    </location>
    <ligand>
        <name>(6R)-5,10-methylene-5,6,7,8-tetrahydrofolate</name>
        <dbReference type="ChEBI" id="CHEBI:15636"/>
    </ligand>
</feature>
<feature type="binding site" description="in other chain" evidence="1">
    <location>
        <position position="189"/>
    </location>
    <ligand>
        <name>dUMP</name>
        <dbReference type="ChEBI" id="CHEBI:246422"/>
        <note>ligand shared between dimeric partners</note>
    </ligand>
</feature>
<feature type="binding site" description="in other chain" evidence="1">
    <location>
        <begin position="219"/>
        <end position="221"/>
    </location>
    <ligand>
        <name>dUMP</name>
        <dbReference type="ChEBI" id="CHEBI:246422"/>
        <note>ligand shared between dimeric partners</note>
    </ligand>
</feature>
<feature type="binding site" evidence="1">
    <location>
        <position position="278"/>
    </location>
    <ligand>
        <name>(6R)-5,10-methylene-5,6,7,8-tetrahydrofolate</name>
        <dbReference type="ChEBI" id="CHEBI:15636"/>
    </ligand>
</feature>
<accession>A3CMU9</accession>
<keyword id="KW-0963">Cytoplasm</keyword>
<keyword id="KW-0489">Methyltransferase</keyword>
<keyword id="KW-0545">Nucleotide biosynthesis</keyword>
<keyword id="KW-1185">Reference proteome</keyword>
<keyword id="KW-0808">Transferase</keyword>
<dbReference type="EC" id="2.1.1.45" evidence="1"/>
<dbReference type="EMBL" id="CP000387">
    <property type="protein sequence ID" value="ABN44504.1"/>
    <property type="molecule type" value="Genomic_DNA"/>
</dbReference>
<dbReference type="RefSeq" id="WP_002902863.1">
    <property type="nucleotide sequence ID" value="NC_009009.1"/>
</dbReference>
<dbReference type="RefSeq" id="YP_001035054.1">
    <property type="nucleotide sequence ID" value="NC_009009.1"/>
</dbReference>
<dbReference type="SMR" id="A3CMU9"/>
<dbReference type="STRING" id="388919.SSA_1091"/>
<dbReference type="KEGG" id="ssa:SSA_1091"/>
<dbReference type="PATRIC" id="fig|388919.9.peg.1037"/>
<dbReference type="eggNOG" id="COG0207">
    <property type="taxonomic scope" value="Bacteria"/>
</dbReference>
<dbReference type="HOGENOM" id="CLU_021669_0_0_9"/>
<dbReference type="OrthoDB" id="9774633at2"/>
<dbReference type="UniPathway" id="UPA00575"/>
<dbReference type="Proteomes" id="UP000002148">
    <property type="component" value="Chromosome"/>
</dbReference>
<dbReference type="GO" id="GO:0005829">
    <property type="term" value="C:cytosol"/>
    <property type="evidence" value="ECO:0007669"/>
    <property type="project" value="TreeGrafter"/>
</dbReference>
<dbReference type="GO" id="GO:0004799">
    <property type="term" value="F:thymidylate synthase activity"/>
    <property type="evidence" value="ECO:0007669"/>
    <property type="project" value="UniProtKB-UniRule"/>
</dbReference>
<dbReference type="GO" id="GO:0006231">
    <property type="term" value="P:dTMP biosynthetic process"/>
    <property type="evidence" value="ECO:0007669"/>
    <property type="project" value="UniProtKB-UniRule"/>
</dbReference>
<dbReference type="GO" id="GO:0006235">
    <property type="term" value="P:dTTP biosynthetic process"/>
    <property type="evidence" value="ECO:0007669"/>
    <property type="project" value="UniProtKB-UniRule"/>
</dbReference>
<dbReference type="GO" id="GO:0032259">
    <property type="term" value="P:methylation"/>
    <property type="evidence" value="ECO:0007669"/>
    <property type="project" value="UniProtKB-KW"/>
</dbReference>
<dbReference type="CDD" id="cd00351">
    <property type="entry name" value="TS_Pyrimidine_HMase"/>
    <property type="match status" value="1"/>
</dbReference>
<dbReference type="FunFam" id="3.30.572.10:FF:000006">
    <property type="entry name" value="Thymidylate synthase"/>
    <property type="match status" value="1"/>
</dbReference>
<dbReference type="Gene3D" id="3.30.572.10">
    <property type="entry name" value="Thymidylate synthase/dCMP hydroxymethylase domain"/>
    <property type="match status" value="1"/>
</dbReference>
<dbReference type="HAMAP" id="MF_00008">
    <property type="entry name" value="Thymidy_synth_bact"/>
    <property type="match status" value="1"/>
</dbReference>
<dbReference type="InterPro" id="IPR045097">
    <property type="entry name" value="Thymidate_synth/dCMP_Mease"/>
</dbReference>
<dbReference type="InterPro" id="IPR023451">
    <property type="entry name" value="Thymidate_synth/dCMP_Mease_dom"/>
</dbReference>
<dbReference type="InterPro" id="IPR036926">
    <property type="entry name" value="Thymidate_synth/dCMP_Mease_sf"/>
</dbReference>
<dbReference type="InterPro" id="IPR000398">
    <property type="entry name" value="Thymidylate_synthase"/>
</dbReference>
<dbReference type="InterPro" id="IPR020940">
    <property type="entry name" value="Thymidylate_synthase_AS"/>
</dbReference>
<dbReference type="NCBIfam" id="NF002495">
    <property type="entry name" value="PRK01827.1-1"/>
    <property type="match status" value="1"/>
</dbReference>
<dbReference type="PANTHER" id="PTHR11548">
    <property type="entry name" value="THYMIDYLATE SYNTHASE 1"/>
    <property type="match status" value="1"/>
</dbReference>
<dbReference type="PANTHER" id="PTHR11548:SF1">
    <property type="entry name" value="THYMIDYLATE SYNTHASE 1"/>
    <property type="match status" value="1"/>
</dbReference>
<dbReference type="Pfam" id="PF00303">
    <property type="entry name" value="Thymidylat_synt"/>
    <property type="match status" value="1"/>
</dbReference>
<dbReference type="PRINTS" id="PR00108">
    <property type="entry name" value="THYMDSNTHASE"/>
</dbReference>
<dbReference type="SUPFAM" id="SSF55831">
    <property type="entry name" value="Thymidylate synthase/dCMP hydroxymethylase"/>
    <property type="match status" value="1"/>
</dbReference>
<dbReference type="PROSITE" id="PS00091">
    <property type="entry name" value="THYMIDYLATE_SYNTHASE"/>
    <property type="match status" value="1"/>
</dbReference>
<organism>
    <name type="scientific">Streptococcus sanguinis (strain SK36)</name>
    <dbReference type="NCBI Taxonomy" id="388919"/>
    <lineage>
        <taxon>Bacteria</taxon>
        <taxon>Bacillati</taxon>
        <taxon>Bacillota</taxon>
        <taxon>Bacilli</taxon>
        <taxon>Lactobacillales</taxon>
        <taxon>Streptococcaceae</taxon>
        <taxon>Streptococcus</taxon>
    </lineage>
</organism>
<protein>
    <recommendedName>
        <fullName evidence="1">Thymidylate synthase</fullName>
        <shortName evidence="1">TS</shortName>
        <shortName evidence="1">TSase</shortName>
        <ecNumber evidence="1">2.1.1.45</ecNumber>
    </recommendedName>
</protein>
<comment type="function">
    <text evidence="1">Catalyzes the reductive methylation of 2'-deoxyuridine-5'-monophosphate (dUMP) to 2'-deoxythymidine-5'-monophosphate (dTMP) while utilizing 5,10-methylenetetrahydrofolate (mTHF) as the methyl donor and reductant in the reaction, yielding dihydrofolate (DHF) as a by-product. This enzymatic reaction provides an intracellular de novo source of dTMP, an essential precursor for DNA biosynthesis.</text>
</comment>
<comment type="catalytic activity">
    <reaction evidence="1">
        <text>dUMP + (6R)-5,10-methylene-5,6,7,8-tetrahydrofolate = 7,8-dihydrofolate + dTMP</text>
        <dbReference type="Rhea" id="RHEA:12104"/>
        <dbReference type="ChEBI" id="CHEBI:15636"/>
        <dbReference type="ChEBI" id="CHEBI:57451"/>
        <dbReference type="ChEBI" id="CHEBI:63528"/>
        <dbReference type="ChEBI" id="CHEBI:246422"/>
        <dbReference type="EC" id="2.1.1.45"/>
    </reaction>
</comment>
<comment type="pathway">
    <text evidence="1">Pyrimidine metabolism; dTTP biosynthesis.</text>
</comment>
<comment type="subunit">
    <text evidence="1">Homodimer.</text>
</comment>
<comment type="subcellular location">
    <subcellularLocation>
        <location evidence="1">Cytoplasm</location>
    </subcellularLocation>
</comment>
<comment type="similarity">
    <text evidence="1">Belongs to the thymidylate synthase family. Bacterial-type ThyA subfamily.</text>
</comment>
<name>TYSY_STRSV</name>